<name>MUTL_TREPA</name>
<proteinExistence type="inferred from homology"/>
<gene>
    <name type="primary">mutL</name>
    <name type="ordered locus">TP_0303</name>
</gene>
<reference key="1">
    <citation type="journal article" date="1998" name="Science">
        <title>Complete genome sequence of Treponema pallidum, the syphilis spirochete.</title>
        <authorList>
            <person name="Fraser C.M."/>
            <person name="Norris S.J."/>
            <person name="Weinstock G.M."/>
            <person name="White O."/>
            <person name="Sutton G.G."/>
            <person name="Dodson R.J."/>
            <person name="Gwinn M.L."/>
            <person name="Hickey E.K."/>
            <person name="Clayton R.A."/>
            <person name="Ketchum K.A."/>
            <person name="Sodergren E."/>
            <person name="Hardham J.M."/>
            <person name="McLeod M.P."/>
            <person name="Salzberg S.L."/>
            <person name="Peterson J.D."/>
            <person name="Khalak H.G."/>
            <person name="Richardson D.L."/>
            <person name="Howell J.K."/>
            <person name="Chidambaram M."/>
            <person name="Utterback T.R."/>
            <person name="McDonald L.A."/>
            <person name="Artiach P."/>
            <person name="Bowman C."/>
            <person name="Cotton M.D."/>
            <person name="Fujii C."/>
            <person name="Garland S.A."/>
            <person name="Hatch B."/>
            <person name="Horst K."/>
            <person name="Roberts K.M."/>
            <person name="Sandusky M."/>
            <person name="Weidman J.F."/>
            <person name="Smith H.O."/>
            <person name="Venter J.C."/>
        </authorList>
    </citation>
    <scope>NUCLEOTIDE SEQUENCE [LARGE SCALE GENOMIC DNA]</scope>
    <source>
        <strain>Nichols</strain>
    </source>
</reference>
<sequence>MHETSYKPIHRLSPDTAKKIAAGEVIERPASVVRELLENALDAGATKIHLEINAGGCALIRVSDNGHGMSPQDLLLCAEAHTTSKISSADDLLQLRTLGFRGEALASIAAVSRLHLTSTRSGPLAWHYQPKAAGTAAHVPPVPQGTEAGVLEPASLERGTVVRVEQLFENFPARKRFLGRQSAETTLCRSALIDVSLAHHPVEFRFTVDGTHKLTLLSQQTRKDRCLETQMLKGDPALFHTIEGGDCSFHFHLVLSEPAICRRERRGIFTFVNGRRIFDYGLVQALVLGSEGYFPNGTFPVACLFLTVNSERIDFNIHPAKKEVHLQDYAHIRHTLSRSVAHFYRQCTIAHYVRAEPAHAPATQGNAPTHSSPPCTGVREEPAAPCAHTPRYESLFPLPVQHAHLLPPSPPHISCEHARDCTHPAPAAEGDAPVHNHTHTGAFKVLGQVAGTFIAVERNNALYLIDQHAAHERIIFDTLQRNLGTAQILLIPYHIHPRSDEEARIMHRACTELSPAGFRFHEEPDGSWHVTAVPLHWRGSEEQLAHDILYSGKNAHDILRHVLATCACRSACKDGTILDDATLHSLVEQAFALPQSRCPHGRPIWIVIGRDELFKRIKRT</sequence>
<keyword id="KW-0227">DNA damage</keyword>
<keyword id="KW-0234">DNA repair</keyword>
<keyword id="KW-1185">Reference proteome</keyword>
<accession>O83325</accession>
<dbReference type="EMBL" id="AE000520">
    <property type="protein sequence ID" value="AAC65291.1"/>
    <property type="status" value="ALT_INIT"/>
    <property type="molecule type" value="Genomic_DNA"/>
</dbReference>
<dbReference type="PIR" id="A71342">
    <property type="entry name" value="A71342"/>
</dbReference>
<dbReference type="SMR" id="O83325"/>
<dbReference type="IntAct" id="O83325">
    <property type="interactions" value="1"/>
</dbReference>
<dbReference type="STRING" id="243276.TP_0303"/>
<dbReference type="EnsemblBacteria" id="AAC65291">
    <property type="protein sequence ID" value="AAC65291"/>
    <property type="gene ID" value="TP_0303"/>
</dbReference>
<dbReference type="KEGG" id="tpa:TP_0303"/>
<dbReference type="eggNOG" id="COG0323">
    <property type="taxonomic scope" value="Bacteria"/>
</dbReference>
<dbReference type="HOGENOM" id="CLU_004131_4_1_12"/>
<dbReference type="Proteomes" id="UP000000811">
    <property type="component" value="Chromosome"/>
</dbReference>
<dbReference type="GO" id="GO:0032300">
    <property type="term" value="C:mismatch repair complex"/>
    <property type="evidence" value="ECO:0007669"/>
    <property type="project" value="InterPro"/>
</dbReference>
<dbReference type="GO" id="GO:0005524">
    <property type="term" value="F:ATP binding"/>
    <property type="evidence" value="ECO:0007669"/>
    <property type="project" value="InterPro"/>
</dbReference>
<dbReference type="GO" id="GO:0016887">
    <property type="term" value="F:ATP hydrolysis activity"/>
    <property type="evidence" value="ECO:0007669"/>
    <property type="project" value="InterPro"/>
</dbReference>
<dbReference type="GO" id="GO:0140664">
    <property type="term" value="F:ATP-dependent DNA damage sensor activity"/>
    <property type="evidence" value="ECO:0007669"/>
    <property type="project" value="InterPro"/>
</dbReference>
<dbReference type="GO" id="GO:0030983">
    <property type="term" value="F:mismatched DNA binding"/>
    <property type="evidence" value="ECO:0007669"/>
    <property type="project" value="InterPro"/>
</dbReference>
<dbReference type="GO" id="GO:0006298">
    <property type="term" value="P:mismatch repair"/>
    <property type="evidence" value="ECO:0007669"/>
    <property type="project" value="UniProtKB-UniRule"/>
</dbReference>
<dbReference type="CDD" id="cd16926">
    <property type="entry name" value="HATPase_MutL-MLH-PMS-like"/>
    <property type="match status" value="1"/>
</dbReference>
<dbReference type="CDD" id="cd00782">
    <property type="entry name" value="MutL_Trans"/>
    <property type="match status" value="1"/>
</dbReference>
<dbReference type="FunFam" id="3.30.565.10:FF:000003">
    <property type="entry name" value="DNA mismatch repair endonuclease MutL"/>
    <property type="match status" value="1"/>
</dbReference>
<dbReference type="Gene3D" id="3.30.230.10">
    <property type="match status" value="1"/>
</dbReference>
<dbReference type="Gene3D" id="3.30.565.10">
    <property type="entry name" value="Histidine kinase-like ATPase, C-terminal domain"/>
    <property type="match status" value="1"/>
</dbReference>
<dbReference type="Gene3D" id="3.30.1540.20">
    <property type="entry name" value="MutL, C-terminal domain, dimerisation subdomain"/>
    <property type="match status" value="1"/>
</dbReference>
<dbReference type="Gene3D" id="3.30.1370.100">
    <property type="entry name" value="MutL, C-terminal domain, regulatory subdomain"/>
    <property type="match status" value="1"/>
</dbReference>
<dbReference type="HAMAP" id="MF_00149">
    <property type="entry name" value="DNA_mis_repair"/>
    <property type="match status" value="1"/>
</dbReference>
<dbReference type="InterPro" id="IPR014762">
    <property type="entry name" value="DNA_mismatch_repair_CS"/>
</dbReference>
<dbReference type="InterPro" id="IPR020667">
    <property type="entry name" value="DNA_mismatch_repair_MutL"/>
</dbReference>
<dbReference type="InterPro" id="IPR013507">
    <property type="entry name" value="DNA_mismatch_S5_2-like"/>
</dbReference>
<dbReference type="InterPro" id="IPR036890">
    <property type="entry name" value="HATPase_C_sf"/>
</dbReference>
<dbReference type="InterPro" id="IPR002099">
    <property type="entry name" value="MutL/Mlh/PMS"/>
</dbReference>
<dbReference type="InterPro" id="IPR038973">
    <property type="entry name" value="MutL/Mlh/Pms-like"/>
</dbReference>
<dbReference type="InterPro" id="IPR014790">
    <property type="entry name" value="MutL_C"/>
</dbReference>
<dbReference type="InterPro" id="IPR042120">
    <property type="entry name" value="MutL_C_dimsub"/>
</dbReference>
<dbReference type="InterPro" id="IPR042121">
    <property type="entry name" value="MutL_C_regsub"/>
</dbReference>
<dbReference type="InterPro" id="IPR037198">
    <property type="entry name" value="MutL_C_sf"/>
</dbReference>
<dbReference type="InterPro" id="IPR020568">
    <property type="entry name" value="Ribosomal_Su5_D2-typ_SF"/>
</dbReference>
<dbReference type="InterPro" id="IPR014721">
    <property type="entry name" value="Ribsml_uS5_D2-typ_fold_subgr"/>
</dbReference>
<dbReference type="NCBIfam" id="TIGR00585">
    <property type="entry name" value="mutl"/>
    <property type="match status" value="1"/>
</dbReference>
<dbReference type="PANTHER" id="PTHR10073">
    <property type="entry name" value="DNA MISMATCH REPAIR PROTEIN MLH, PMS, MUTL"/>
    <property type="match status" value="1"/>
</dbReference>
<dbReference type="PANTHER" id="PTHR10073:SF12">
    <property type="entry name" value="DNA MISMATCH REPAIR PROTEIN MLH1"/>
    <property type="match status" value="1"/>
</dbReference>
<dbReference type="Pfam" id="PF01119">
    <property type="entry name" value="DNA_mis_repair"/>
    <property type="match status" value="1"/>
</dbReference>
<dbReference type="Pfam" id="PF13589">
    <property type="entry name" value="HATPase_c_3"/>
    <property type="match status" value="1"/>
</dbReference>
<dbReference type="Pfam" id="PF08676">
    <property type="entry name" value="MutL_C"/>
    <property type="match status" value="1"/>
</dbReference>
<dbReference type="SMART" id="SM01340">
    <property type="entry name" value="DNA_mis_repair"/>
    <property type="match status" value="1"/>
</dbReference>
<dbReference type="SMART" id="SM00853">
    <property type="entry name" value="MutL_C"/>
    <property type="match status" value="1"/>
</dbReference>
<dbReference type="SUPFAM" id="SSF55874">
    <property type="entry name" value="ATPase domain of HSP90 chaperone/DNA topoisomerase II/histidine kinase"/>
    <property type="match status" value="1"/>
</dbReference>
<dbReference type="SUPFAM" id="SSF118116">
    <property type="entry name" value="DNA mismatch repair protein MutL"/>
    <property type="match status" value="1"/>
</dbReference>
<dbReference type="SUPFAM" id="SSF54211">
    <property type="entry name" value="Ribosomal protein S5 domain 2-like"/>
    <property type="match status" value="1"/>
</dbReference>
<dbReference type="PROSITE" id="PS00058">
    <property type="entry name" value="DNA_MISMATCH_REPAIR_1"/>
    <property type="match status" value="1"/>
</dbReference>
<feature type="chain" id="PRO_0000177988" description="DNA mismatch repair protein MutL">
    <location>
        <begin position="1"/>
        <end position="620"/>
    </location>
</feature>
<feature type="region of interest" description="Disordered" evidence="2">
    <location>
        <begin position="360"/>
        <end position="382"/>
    </location>
</feature>
<feature type="compositionally biased region" description="Polar residues" evidence="2">
    <location>
        <begin position="363"/>
        <end position="374"/>
    </location>
</feature>
<evidence type="ECO:0000250" key="1"/>
<evidence type="ECO:0000256" key="2">
    <source>
        <dbReference type="SAM" id="MobiDB-lite"/>
    </source>
</evidence>
<evidence type="ECO:0000305" key="3"/>
<protein>
    <recommendedName>
        <fullName>DNA mismatch repair protein MutL</fullName>
    </recommendedName>
</protein>
<comment type="function">
    <text evidence="1">This protein is involved in the repair of mismatches in DNA. It is required for dam-dependent methyl-directed DNA mismatch repair. May act as a 'molecular matchmaker', a protein that promotes the formation of a stable complex between two or more DNA-binding proteins in an ATP-dependent manner without itself being part of a final effector complex (By similarity).</text>
</comment>
<comment type="similarity">
    <text evidence="3">Belongs to the DNA mismatch repair MutL/HexB family.</text>
</comment>
<comment type="sequence caution" evidence="3">
    <conflict type="erroneous initiation">
        <sequence resource="EMBL-CDS" id="AAC65291"/>
    </conflict>
</comment>
<organism>
    <name type="scientific">Treponema pallidum (strain Nichols)</name>
    <dbReference type="NCBI Taxonomy" id="243276"/>
    <lineage>
        <taxon>Bacteria</taxon>
        <taxon>Pseudomonadati</taxon>
        <taxon>Spirochaetota</taxon>
        <taxon>Spirochaetia</taxon>
        <taxon>Spirochaetales</taxon>
        <taxon>Treponemataceae</taxon>
        <taxon>Treponema</taxon>
    </lineage>
</organism>